<accession>Q4KFX8</accession>
<feature type="chain" id="PRO_0000224222" description="Chaperone protein HtpG">
    <location>
        <begin position="1"/>
        <end position="634"/>
    </location>
</feature>
<feature type="region of interest" description="A; substrate-binding" evidence="1">
    <location>
        <begin position="1"/>
        <end position="342"/>
    </location>
</feature>
<feature type="region of interest" description="B" evidence="1">
    <location>
        <begin position="343"/>
        <end position="559"/>
    </location>
</feature>
<feature type="region of interest" description="C" evidence="1">
    <location>
        <begin position="560"/>
        <end position="634"/>
    </location>
</feature>
<proteinExistence type="inferred from homology"/>
<reference key="1">
    <citation type="journal article" date="2005" name="Nat. Biotechnol.">
        <title>Complete genome sequence of the plant commensal Pseudomonas fluorescens Pf-5.</title>
        <authorList>
            <person name="Paulsen I.T."/>
            <person name="Press C.M."/>
            <person name="Ravel J."/>
            <person name="Kobayashi D.Y."/>
            <person name="Myers G.S.A."/>
            <person name="Mavrodi D.V."/>
            <person name="DeBoy R.T."/>
            <person name="Seshadri R."/>
            <person name="Ren Q."/>
            <person name="Madupu R."/>
            <person name="Dodson R.J."/>
            <person name="Durkin A.S."/>
            <person name="Brinkac L.M."/>
            <person name="Daugherty S.C."/>
            <person name="Sullivan S.A."/>
            <person name="Rosovitz M.J."/>
            <person name="Gwinn M.L."/>
            <person name="Zhou L."/>
            <person name="Schneider D.J."/>
            <person name="Cartinhour S.W."/>
            <person name="Nelson W.C."/>
            <person name="Weidman J."/>
            <person name="Watkins K."/>
            <person name="Tran K."/>
            <person name="Khouri H."/>
            <person name="Pierson E.A."/>
            <person name="Pierson L.S. III"/>
            <person name="Thomashow L.S."/>
            <person name="Loper J.E."/>
        </authorList>
    </citation>
    <scope>NUCLEOTIDE SEQUENCE [LARGE SCALE GENOMIC DNA]</scope>
    <source>
        <strain>ATCC BAA-477 / NRRL B-23932 / Pf-5</strain>
    </source>
</reference>
<sequence length="634" mass="71349">MSVETQKETLGFQTEVKQLLHLMIHSLYSNKEIFLRELISNASDAVDKLRFEALSKPELLEGGAELKIRVSFDKDAKTVTLEDNGIGMSREDVITHLGTIAKSGTADFMKNLTGDQKKDSHLIGQFGVGFYSAFIVADQVEVFSRRAGLPASEGVHWSSKGEGEFEVATIDKAERGTRIVLHLKSGEDEFADGWRLRNIIKKYSDHIALPIELPKEAAAAEGEEKPALEWETVNRASALWTRPRTEIKDEEYQEFYKHIAHDFENPLSWSHNKVEGKLEYSSLLYVPARAPFDLYQREAPKGLKLYVQRVFVMDQAESFLPLYLRFIKGVVDSNDLSLNVSREILQKDPIIDSMKSALTKRVLDMLEKLAKNEPEQYKGFWKNFGQVMKEGPAEDFANKEKIAGLLRFASTQGDDGEQNVSLADYLARAKEGQDKIYFLTGESYAQVKNSPHLEVFRKKGIEVLLLTDRIDEWLMSYLNEFDGKSFVDVARGDLDLGNLDSEEDKKAAEEVAKTKEGLVERIKTALGESVSEVRVSHRLTDSPAILAIGEQDLGLQMRQILEASGQKVPDSKPIFEFNPTHPLIEKLDGEQSEERFGDLSHILFDQAALAAGDSLKDPAAYVRRLNKLLVELSV</sequence>
<protein>
    <recommendedName>
        <fullName evidence="1">Chaperone protein HtpG</fullName>
    </recommendedName>
    <alternativeName>
        <fullName evidence="1">Heat shock protein HtpG</fullName>
    </alternativeName>
    <alternativeName>
        <fullName evidence="1">High temperature protein G</fullName>
    </alternativeName>
</protein>
<evidence type="ECO:0000255" key="1">
    <source>
        <dbReference type="HAMAP-Rule" id="MF_00505"/>
    </source>
</evidence>
<keyword id="KW-0067">ATP-binding</keyword>
<keyword id="KW-0143">Chaperone</keyword>
<keyword id="KW-0963">Cytoplasm</keyword>
<keyword id="KW-0547">Nucleotide-binding</keyword>
<keyword id="KW-0346">Stress response</keyword>
<gene>
    <name evidence="1" type="primary">htpG</name>
    <name type="ordered locus">PFL_1729</name>
</gene>
<organism>
    <name type="scientific">Pseudomonas fluorescens (strain ATCC BAA-477 / NRRL B-23932 / Pf-5)</name>
    <dbReference type="NCBI Taxonomy" id="220664"/>
    <lineage>
        <taxon>Bacteria</taxon>
        <taxon>Pseudomonadati</taxon>
        <taxon>Pseudomonadota</taxon>
        <taxon>Gammaproteobacteria</taxon>
        <taxon>Pseudomonadales</taxon>
        <taxon>Pseudomonadaceae</taxon>
        <taxon>Pseudomonas</taxon>
    </lineage>
</organism>
<name>HTPG_PSEF5</name>
<dbReference type="EMBL" id="CP000076">
    <property type="protein sequence ID" value="AAY91024.1"/>
    <property type="molecule type" value="Genomic_DNA"/>
</dbReference>
<dbReference type="RefSeq" id="WP_011060059.1">
    <property type="nucleotide sequence ID" value="NC_004129.6"/>
</dbReference>
<dbReference type="SMR" id="Q4KFX8"/>
<dbReference type="STRING" id="220664.PFL_1729"/>
<dbReference type="GeneID" id="57474749"/>
<dbReference type="KEGG" id="pfl:PFL_1729"/>
<dbReference type="PATRIC" id="fig|220664.5.peg.1768"/>
<dbReference type="eggNOG" id="COG0326">
    <property type="taxonomic scope" value="Bacteria"/>
</dbReference>
<dbReference type="HOGENOM" id="CLU_006684_3_0_6"/>
<dbReference type="Proteomes" id="UP000008540">
    <property type="component" value="Chromosome"/>
</dbReference>
<dbReference type="GO" id="GO:0005737">
    <property type="term" value="C:cytoplasm"/>
    <property type="evidence" value="ECO:0007669"/>
    <property type="project" value="UniProtKB-SubCell"/>
</dbReference>
<dbReference type="GO" id="GO:0005524">
    <property type="term" value="F:ATP binding"/>
    <property type="evidence" value="ECO:0007669"/>
    <property type="project" value="UniProtKB-UniRule"/>
</dbReference>
<dbReference type="GO" id="GO:0016887">
    <property type="term" value="F:ATP hydrolysis activity"/>
    <property type="evidence" value="ECO:0007669"/>
    <property type="project" value="InterPro"/>
</dbReference>
<dbReference type="GO" id="GO:0140662">
    <property type="term" value="F:ATP-dependent protein folding chaperone"/>
    <property type="evidence" value="ECO:0007669"/>
    <property type="project" value="InterPro"/>
</dbReference>
<dbReference type="GO" id="GO:0051082">
    <property type="term" value="F:unfolded protein binding"/>
    <property type="evidence" value="ECO:0007669"/>
    <property type="project" value="UniProtKB-UniRule"/>
</dbReference>
<dbReference type="CDD" id="cd16927">
    <property type="entry name" value="HATPase_Hsp90-like"/>
    <property type="match status" value="1"/>
</dbReference>
<dbReference type="FunFam" id="3.30.230.80:FF:000002">
    <property type="entry name" value="Molecular chaperone HtpG"/>
    <property type="match status" value="1"/>
</dbReference>
<dbReference type="FunFam" id="3.30.565.10:FF:000009">
    <property type="entry name" value="Molecular chaperone HtpG"/>
    <property type="match status" value="1"/>
</dbReference>
<dbReference type="Gene3D" id="3.30.230.80">
    <property type="match status" value="1"/>
</dbReference>
<dbReference type="Gene3D" id="3.40.50.11260">
    <property type="match status" value="1"/>
</dbReference>
<dbReference type="Gene3D" id="1.20.120.790">
    <property type="entry name" value="Heat shock protein 90, C-terminal domain"/>
    <property type="match status" value="1"/>
</dbReference>
<dbReference type="Gene3D" id="3.30.565.10">
    <property type="entry name" value="Histidine kinase-like ATPase, C-terminal domain"/>
    <property type="match status" value="1"/>
</dbReference>
<dbReference type="HAMAP" id="MF_00505">
    <property type="entry name" value="HSP90"/>
    <property type="match status" value="1"/>
</dbReference>
<dbReference type="InterPro" id="IPR036890">
    <property type="entry name" value="HATPase_C_sf"/>
</dbReference>
<dbReference type="InterPro" id="IPR019805">
    <property type="entry name" value="Heat_shock_protein_90_CS"/>
</dbReference>
<dbReference type="InterPro" id="IPR037196">
    <property type="entry name" value="HSP90_C"/>
</dbReference>
<dbReference type="InterPro" id="IPR001404">
    <property type="entry name" value="Hsp90_fam"/>
</dbReference>
<dbReference type="InterPro" id="IPR020575">
    <property type="entry name" value="Hsp90_N"/>
</dbReference>
<dbReference type="InterPro" id="IPR020568">
    <property type="entry name" value="Ribosomal_Su5_D2-typ_SF"/>
</dbReference>
<dbReference type="NCBIfam" id="NF003555">
    <property type="entry name" value="PRK05218.1"/>
    <property type="match status" value="1"/>
</dbReference>
<dbReference type="PANTHER" id="PTHR11528">
    <property type="entry name" value="HEAT SHOCK PROTEIN 90 FAMILY MEMBER"/>
    <property type="match status" value="1"/>
</dbReference>
<dbReference type="Pfam" id="PF13589">
    <property type="entry name" value="HATPase_c_3"/>
    <property type="match status" value="1"/>
</dbReference>
<dbReference type="Pfam" id="PF00183">
    <property type="entry name" value="HSP90"/>
    <property type="match status" value="1"/>
</dbReference>
<dbReference type="PIRSF" id="PIRSF002583">
    <property type="entry name" value="Hsp90"/>
    <property type="match status" value="1"/>
</dbReference>
<dbReference type="PRINTS" id="PR00775">
    <property type="entry name" value="HEATSHOCK90"/>
</dbReference>
<dbReference type="SMART" id="SM00387">
    <property type="entry name" value="HATPase_c"/>
    <property type="match status" value="1"/>
</dbReference>
<dbReference type="SUPFAM" id="SSF55874">
    <property type="entry name" value="ATPase domain of HSP90 chaperone/DNA topoisomerase II/histidine kinase"/>
    <property type="match status" value="1"/>
</dbReference>
<dbReference type="SUPFAM" id="SSF110942">
    <property type="entry name" value="HSP90 C-terminal domain"/>
    <property type="match status" value="1"/>
</dbReference>
<dbReference type="SUPFAM" id="SSF54211">
    <property type="entry name" value="Ribosomal protein S5 domain 2-like"/>
    <property type="match status" value="1"/>
</dbReference>
<dbReference type="PROSITE" id="PS00298">
    <property type="entry name" value="HSP90"/>
    <property type="match status" value="1"/>
</dbReference>
<comment type="function">
    <text evidence="1">Molecular chaperone. Has ATPase activity.</text>
</comment>
<comment type="subunit">
    <text evidence="1">Homodimer.</text>
</comment>
<comment type="subcellular location">
    <subcellularLocation>
        <location evidence="1">Cytoplasm</location>
    </subcellularLocation>
</comment>
<comment type="similarity">
    <text evidence="1">Belongs to the heat shock protein 90 family.</text>
</comment>